<name>LEU1_POLAQ</name>
<dbReference type="EC" id="2.3.3.13" evidence="1"/>
<dbReference type="EMBL" id="CP000655">
    <property type="protein sequence ID" value="ABP34274.1"/>
    <property type="molecule type" value="Genomic_DNA"/>
</dbReference>
<dbReference type="RefSeq" id="WP_011902899.1">
    <property type="nucleotide sequence ID" value="NC_009379.1"/>
</dbReference>
<dbReference type="SMR" id="A4SXR0"/>
<dbReference type="GeneID" id="31481433"/>
<dbReference type="KEGG" id="pnu:Pnuc_1058"/>
<dbReference type="eggNOG" id="COG0119">
    <property type="taxonomic scope" value="Bacteria"/>
</dbReference>
<dbReference type="HOGENOM" id="CLU_022158_0_1_4"/>
<dbReference type="UniPathway" id="UPA00048">
    <property type="reaction ID" value="UER00070"/>
</dbReference>
<dbReference type="Proteomes" id="UP000000231">
    <property type="component" value="Chromosome"/>
</dbReference>
<dbReference type="GO" id="GO:0005829">
    <property type="term" value="C:cytosol"/>
    <property type="evidence" value="ECO:0007669"/>
    <property type="project" value="TreeGrafter"/>
</dbReference>
<dbReference type="GO" id="GO:0003852">
    <property type="term" value="F:2-isopropylmalate synthase activity"/>
    <property type="evidence" value="ECO:0007669"/>
    <property type="project" value="UniProtKB-UniRule"/>
</dbReference>
<dbReference type="GO" id="GO:0003985">
    <property type="term" value="F:acetyl-CoA C-acetyltransferase activity"/>
    <property type="evidence" value="ECO:0007669"/>
    <property type="project" value="UniProtKB-UniRule"/>
</dbReference>
<dbReference type="GO" id="GO:0030145">
    <property type="term" value="F:manganese ion binding"/>
    <property type="evidence" value="ECO:0007669"/>
    <property type="project" value="UniProtKB-UniRule"/>
</dbReference>
<dbReference type="GO" id="GO:0009098">
    <property type="term" value="P:L-leucine biosynthetic process"/>
    <property type="evidence" value="ECO:0007669"/>
    <property type="project" value="UniProtKB-UniRule"/>
</dbReference>
<dbReference type="CDD" id="cd07940">
    <property type="entry name" value="DRE_TIM_IPMS"/>
    <property type="match status" value="1"/>
</dbReference>
<dbReference type="FunFam" id="1.10.238.260:FF:000001">
    <property type="entry name" value="2-isopropylmalate synthase"/>
    <property type="match status" value="1"/>
</dbReference>
<dbReference type="FunFam" id="3.20.20.70:FF:000010">
    <property type="entry name" value="2-isopropylmalate synthase"/>
    <property type="match status" value="1"/>
</dbReference>
<dbReference type="FunFam" id="3.30.160.270:FF:000003">
    <property type="entry name" value="2-isopropylmalate synthase"/>
    <property type="match status" value="1"/>
</dbReference>
<dbReference type="Gene3D" id="1.10.238.260">
    <property type="match status" value="1"/>
</dbReference>
<dbReference type="Gene3D" id="3.30.160.270">
    <property type="match status" value="1"/>
</dbReference>
<dbReference type="Gene3D" id="3.20.20.70">
    <property type="entry name" value="Aldolase class I"/>
    <property type="match status" value="1"/>
</dbReference>
<dbReference type="HAMAP" id="MF_01025">
    <property type="entry name" value="LeuA_type1"/>
    <property type="match status" value="1"/>
</dbReference>
<dbReference type="InterPro" id="IPR050073">
    <property type="entry name" value="2-IPM_HCS-like"/>
</dbReference>
<dbReference type="InterPro" id="IPR013709">
    <property type="entry name" value="2-isopropylmalate_synth_dimer"/>
</dbReference>
<dbReference type="InterPro" id="IPR002034">
    <property type="entry name" value="AIPM/Hcit_synth_CS"/>
</dbReference>
<dbReference type="InterPro" id="IPR013785">
    <property type="entry name" value="Aldolase_TIM"/>
</dbReference>
<dbReference type="InterPro" id="IPR054691">
    <property type="entry name" value="LeuA/HCS_post-cat"/>
</dbReference>
<dbReference type="InterPro" id="IPR036230">
    <property type="entry name" value="LeuA_allosteric_dom_sf"/>
</dbReference>
<dbReference type="InterPro" id="IPR005671">
    <property type="entry name" value="LeuA_bact_synth"/>
</dbReference>
<dbReference type="InterPro" id="IPR000891">
    <property type="entry name" value="PYR_CT"/>
</dbReference>
<dbReference type="NCBIfam" id="TIGR00973">
    <property type="entry name" value="leuA_bact"/>
    <property type="match status" value="1"/>
</dbReference>
<dbReference type="NCBIfam" id="NF002086">
    <property type="entry name" value="PRK00915.1-3"/>
    <property type="match status" value="1"/>
</dbReference>
<dbReference type="NCBIfam" id="NF002087">
    <property type="entry name" value="PRK00915.1-4"/>
    <property type="match status" value="1"/>
</dbReference>
<dbReference type="PANTHER" id="PTHR10277:SF9">
    <property type="entry name" value="2-ISOPROPYLMALATE SYNTHASE 1, CHLOROPLASTIC-RELATED"/>
    <property type="match status" value="1"/>
</dbReference>
<dbReference type="PANTHER" id="PTHR10277">
    <property type="entry name" value="HOMOCITRATE SYNTHASE-RELATED"/>
    <property type="match status" value="1"/>
</dbReference>
<dbReference type="Pfam" id="PF22617">
    <property type="entry name" value="HCS_D2"/>
    <property type="match status" value="1"/>
</dbReference>
<dbReference type="Pfam" id="PF00682">
    <property type="entry name" value="HMGL-like"/>
    <property type="match status" value="1"/>
</dbReference>
<dbReference type="Pfam" id="PF08502">
    <property type="entry name" value="LeuA_dimer"/>
    <property type="match status" value="1"/>
</dbReference>
<dbReference type="SMART" id="SM00917">
    <property type="entry name" value="LeuA_dimer"/>
    <property type="match status" value="1"/>
</dbReference>
<dbReference type="SUPFAM" id="SSF110921">
    <property type="entry name" value="2-isopropylmalate synthase LeuA, allosteric (dimerisation) domain"/>
    <property type="match status" value="1"/>
</dbReference>
<dbReference type="SUPFAM" id="SSF51569">
    <property type="entry name" value="Aldolase"/>
    <property type="match status" value="1"/>
</dbReference>
<dbReference type="PROSITE" id="PS00815">
    <property type="entry name" value="AIPM_HOMOCIT_SYNTH_1"/>
    <property type="match status" value="1"/>
</dbReference>
<dbReference type="PROSITE" id="PS00816">
    <property type="entry name" value="AIPM_HOMOCIT_SYNTH_2"/>
    <property type="match status" value="1"/>
</dbReference>
<dbReference type="PROSITE" id="PS50991">
    <property type="entry name" value="PYR_CT"/>
    <property type="match status" value="1"/>
</dbReference>
<sequence length="515" mass="55488">MSDKVIIFDTTLRDGEQSPGASMTKDEKVRIARQLERLKVDVIEAGFAASSEGDFQAISAVAAAVKDSIVCSLARANDKDITRAADALQAANAKRIHAFLATSPLHMAVKLRMSPEEVLEQAKRSIRFARNLASDIEFSAEDGYRSEMDFLCRVVEAVINEGASTINIPDTVGYATPELYGDFIKTLRTRVPNSDKAVWSVHCHNDLGMAVANSLAGVKIGGARQIECTINGLGERAGNTALEEIVMALRTRKDYFDMVCGIDASQIVPASKLVSQITGFVVQPNKAVVGANAFAHTSGIHQDGILKNRDTYEIMRAEDVGWSANKIVLGKLSGRNAFKQRLQELGITVEAEADLNEAFTRFKALADQKSEIFDEDIIAIMSDSAAAEEGEHYHFISLSQHSETGERPKSRVIFRMGDKEVSSEAEGNGPVDASLNAIEEIAKSGAEQLLYSVNAITSGTQSQGEVTVRLSKGGRIVNGVGTDPDIIAASAKAYLSALNKLHDPSQAKLNAQMAP</sequence>
<proteinExistence type="inferred from homology"/>
<feature type="chain" id="PRO_1000149239" description="2-isopropylmalate synthase">
    <location>
        <begin position="1"/>
        <end position="515"/>
    </location>
</feature>
<feature type="domain" description="Pyruvate carboxyltransferase" evidence="1">
    <location>
        <begin position="5"/>
        <end position="268"/>
    </location>
</feature>
<feature type="region of interest" description="Regulatory domain" evidence="1">
    <location>
        <begin position="394"/>
        <end position="515"/>
    </location>
</feature>
<feature type="binding site" evidence="1">
    <location>
        <position position="14"/>
    </location>
    <ligand>
        <name>Mn(2+)</name>
        <dbReference type="ChEBI" id="CHEBI:29035"/>
    </ligand>
</feature>
<feature type="binding site" evidence="1">
    <location>
        <position position="202"/>
    </location>
    <ligand>
        <name>Mn(2+)</name>
        <dbReference type="ChEBI" id="CHEBI:29035"/>
    </ligand>
</feature>
<feature type="binding site" evidence="1">
    <location>
        <position position="204"/>
    </location>
    <ligand>
        <name>Mn(2+)</name>
        <dbReference type="ChEBI" id="CHEBI:29035"/>
    </ligand>
</feature>
<feature type="binding site" evidence="1">
    <location>
        <position position="239"/>
    </location>
    <ligand>
        <name>Mn(2+)</name>
        <dbReference type="ChEBI" id="CHEBI:29035"/>
    </ligand>
</feature>
<evidence type="ECO:0000255" key="1">
    <source>
        <dbReference type="HAMAP-Rule" id="MF_01025"/>
    </source>
</evidence>
<comment type="function">
    <text evidence="1">Catalyzes the condensation of the acetyl group of acetyl-CoA with 3-methyl-2-oxobutanoate (2-ketoisovalerate) to form 3-carboxy-3-hydroxy-4-methylpentanoate (2-isopropylmalate).</text>
</comment>
<comment type="catalytic activity">
    <reaction evidence="1">
        <text>3-methyl-2-oxobutanoate + acetyl-CoA + H2O = (2S)-2-isopropylmalate + CoA + H(+)</text>
        <dbReference type="Rhea" id="RHEA:21524"/>
        <dbReference type="ChEBI" id="CHEBI:1178"/>
        <dbReference type="ChEBI" id="CHEBI:11851"/>
        <dbReference type="ChEBI" id="CHEBI:15377"/>
        <dbReference type="ChEBI" id="CHEBI:15378"/>
        <dbReference type="ChEBI" id="CHEBI:57287"/>
        <dbReference type="ChEBI" id="CHEBI:57288"/>
        <dbReference type="EC" id="2.3.3.13"/>
    </reaction>
</comment>
<comment type="cofactor">
    <cofactor evidence="1">
        <name>Mn(2+)</name>
        <dbReference type="ChEBI" id="CHEBI:29035"/>
    </cofactor>
</comment>
<comment type="pathway">
    <text evidence="1">Amino-acid biosynthesis; L-leucine biosynthesis; L-leucine from 3-methyl-2-oxobutanoate: step 1/4.</text>
</comment>
<comment type="subunit">
    <text evidence="1">Homodimer.</text>
</comment>
<comment type="subcellular location">
    <subcellularLocation>
        <location evidence="1">Cytoplasm</location>
    </subcellularLocation>
</comment>
<comment type="similarity">
    <text evidence="1">Belongs to the alpha-IPM synthase/homocitrate synthase family. LeuA type 1 subfamily.</text>
</comment>
<accession>A4SXR0</accession>
<protein>
    <recommendedName>
        <fullName evidence="1">2-isopropylmalate synthase</fullName>
        <ecNumber evidence="1">2.3.3.13</ecNumber>
    </recommendedName>
    <alternativeName>
        <fullName evidence="1">Alpha-IPM synthase</fullName>
    </alternativeName>
    <alternativeName>
        <fullName evidence="1">Alpha-isopropylmalate synthase</fullName>
    </alternativeName>
</protein>
<organism>
    <name type="scientific">Polynucleobacter asymbioticus (strain DSM 18221 / CIP 109841 / QLW-P1DMWA-1)</name>
    <name type="common">Polynucleobacter necessarius subsp. asymbioticus</name>
    <dbReference type="NCBI Taxonomy" id="312153"/>
    <lineage>
        <taxon>Bacteria</taxon>
        <taxon>Pseudomonadati</taxon>
        <taxon>Pseudomonadota</taxon>
        <taxon>Betaproteobacteria</taxon>
        <taxon>Burkholderiales</taxon>
        <taxon>Burkholderiaceae</taxon>
        <taxon>Polynucleobacter</taxon>
    </lineage>
</organism>
<gene>
    <name evidence="1" type="primary">leuA</name>
    <name type="ordered locus">Pnuc_1058</name>
</gene>
<keyword id="KW-0028">Amino-acid biosynthesis</keyword>
<keyword id="KW-0100">Branched-chain amino acid biosynthesis</keyword>
<keyword id="KW-0963">Cytoplasm</keyword>
<keyword id="KW-0432">Leucine biosynthesis</keyword>
<keyword id="KW-0464">Manganese</keyword>
<keyword id="KW-0479">Metal-binding</keyword>
<keyword id="KW-1185">Reference proteome</keyword>
<keyword id="KW-0808">Transferase</keyword>
<reference key="1">
    <citation type="journal article" date="2012" name="Stand. Genomic Sci.">
        <title>Complete genome sequence of Polynucleobacter necessarius subsp. asymbioticus type strain (QLW-P1DMWA-1(T)).</title>
        <authorList>
            <person name="Meincke L."/>
            <person name="Copeland A."/>
            <person name="Lapidus A."/>
            <person name="Lucas S."/>
            <person name="Berry K.W."/>
            <person name="Del Rio T.G."/>
            <person name="Hammon N."/>
            <person name="Dalin E."/>
            <person name="Tice H."/>
            <person name="Pitluck S."/>
            <person name="Richardson P."/>
            <person name="Bruce D."/>
            <person name="Goodwin L."/>
            <person name="Han C."/>
            <person name="Tapia R."/>
            <person name="Detter J.C."/>
            <person name="Schmutz J."/>
            <person name="Brettin T."/>
            <person name="Larimer F."/>
            <person name="Land M."/>
            <person name="Hauser L."/>
            <person name="Kyrpides N.C."/>
            <person name="Ivanova N."/>
            <person name="Goker M."/>
            <person name="Woyke T."/>
            <person name="Wu Q.L."/>
            <person name="Pockl M."/>
            <person name="Hahn M.W."/>
            <person name="Klenk H.P."/>
        </authorList>
    </citation>
    <scope>NUCLEOTIDE SEQUENCE [LARGE SCALE GENOMIC DNA]</scope>
    <source>
        <strain>DSM 18221 / CIP 109841 / QLW-P1DMWA-1</strain>
    </source>
</reference>